<gene>
    <name type="primary">SATB2</name>
    <name type="synonym">KIAA1034</name>
</gene>
<keyword id="KW-0002">3D-structure</keyword>
<keyword id="KW-0025">Alternative splicing</keyword>
<keyword id="KW-0156">Chromatin regulator</keyword>
<keyword id="KW-0160">Chromosomal rearrangement</keyword>
<keyword id="KW-0217">Developmental protein</keyword>
<keyword id="KW-0225">Disease variant</keyword>
<keyword id="KW-0238">DNA-binding</keyword>
<keyword id="KW-0371">Homeobox</keyword>
<keyword id="KW-0991">Intellectual disability</keyword>
<keyword id="KW-1017">Isopeptide bond</keyword>
<keyword id="KW-0539">Nucleus</keyword>
<keyword id="KW-0597">Phosphoprotein</keyword>
<keyword id="KW-1267">Proteomics identification</keyword>
<keyword id="KW-1185">Reference proteome</keyword>
<keyword id="KW-0677">Repeat</keyword>
<keyword id="KW-0678">Repressor</keyword>
<keyword id="KW-0804">Transcription</keyword>
<keyword id="KW-0805">Transcription regulation</keyword>
<keyword id="KW-0832">Ubl conjugation</keyword>
<evidence type="ECO:0000250" key="1"/>
<evidence type="ECO:0000255" key="2">
    <source>
        <dbReference type="PROSITE-ProRule" id="PRU00108"/>
    </source>
</evidence>
<evidence type="ECO:0000255" key="3">
    <source>
        <dbReference type="PROSITE-ProRule" id="PRU00374"/>
    </source>
</evidence>
<evidence type="ECO:0000255" key="4">
    <source>
        <dbReference type="PROSITE-ProRule" id="PRU01326"/>
    </source>
</evidence>
<evidence type="ECO:0000255" key="5">
    <source>
        <dbReference type="PROSITE-ProRule" id="PRU01327"/>
    </source>
</evidence>
<evidence type="ECO:0000256" key="6">
    <source>
        <dbReference type="SAM" id="MobiDB-lite"/>
    </source>
</evidence>
<evidence type="ECO:0000269" key="7">
    <source>
    </source>
</evidence>
<evidence type="ECO:0000269" key="8">
    <source>
    </source>
</evidence>
<evidence type="ECO:0000269" key="9">
    <source>
    </source>
</evidence>
<evidence type="ECO:0000269" key="10">
    <source>
    </source>
</evidence>
<evidence type="ECO:0000303" key="11">
    <source>
    </source>
</evidence>
<evidence type="ECO:0000305" key="12"/>
<evidence type="ECO:0007744" key="13">
    <source>
    </source>
</evidence>
<evidence type="ECO:0007744" key="14">
    <source>
    </source>
</evidence>
<evidence type="ECO:0007744" key="15">
    <source>
    </source>
</evidence>
<evidence type="ECO:0007744" key="16">
    <source>
    </source>
</evidence>
<evidence type="ECO:0007744" key="17">
    <source>
    </source>
</evidence>
<evidence type="ECO:0007829" key="18">
    <source>
        <dbReference type="PDB" id="1WI3"/>
    </source>
</evidence>
<evidence type="ECO:0007829" key="19">
    <source>
        <dbReference type="PDB" id="1WIZ"/>
    </source>
</evidence>
<evidence type="ECO:0007829" key="20">
    <source>
        <dbReference type="PDB" id="2CSF"/>
    </source>
</evidence>
<name>SATB2_HUMAN</name>
<feature type="chain" id="PRO_0000202400" description="DNA-binding protein SATB2">
    <location>
        <begin position="1"/>
        <end position="733"/>
    </location>
</feature>
<feature type="domain" description="CMP" evidence="4">
    <location>
        <begin position="57"/>
        <end position="158"/>
    </location>
</feature>
<feature type="domain" description="CUTL" evidence="5">
    <location>
        <begin position="161"/>
        <end position="234"/>
    </location>
</feature>
<feature type="DNA-binding region" description="CUT 1" evidence="3">
    <location>
        <begin position="350"/>
        <end position="437"/>
    </location>
</feature>
<feature type="DNA-binding region" description="CUT 2" evidence="3">
    <location>
        <begin position="473"/>
        <end position="560"/>
    </location>
</feature>
<feature type="DNA-binding region" description="Homeobox" evidence="2">
    <location>
        <begin position="615"/>
        <end position="674"/>
    </location>
</feature>
<feature type="region of interest" description="Disordered" evidence="6">
    <location>
        <begin position="1"/>
        <end position="47"/>
    </location>
</feature>
<feature type="region of interest" description="Disordered" evidence="6">
    <location>
        <begin position="435"/>
        <end position="473"/>
    </location>
</feature>
<feature type="region of interest" description="Disordered" evidence="6">
    <location>
        <begin position="580"/>
        <end position="617"/>
    </location>
</feature>
<feature type="region of interest" description="Disordered" evidence="6">
    <location>
        <begin position="694"/>
        <end position="733"/>
    </location>
</feature>
<feature type="compositionally biased region" description="Low complexity" evidence="6">
    <location>
        <begin position="441"/>
        <end position="458"/>
    </location>
</feature>
<feature type="compositionally biased region" description="Polar residues" evidence="6">
    <location>
        <begin position="459"/>
        <end position="470"/>
    </location>
</feature>
<feature type="compositionally biased region" description="Low complexity" evidence="6">
    <location>
        <begin position="580"/>
        <end position="593"/>
    </location>
</feature>
<feature type="compositionally biased region" description="Acidic residues" evidence="6">
    <location>
        <begin position="694"/>
        <end position="708"/>
    </location>
</feature>
<feature type="compositionally biased region" description="Basic and acidic residues" evidence="6">
    <location>
        <begin position="709"/>
        <end position="733"/>
    </location>
</feature>
<feature type="modified residue" description="Phosphoserine" evidence="13">
    <location>
        <position position="20"/>
    </location>
</feature>
<feature type="modified residue" description="Phosphoserine" evidence="13">
    <location>
        <position position="39"/>
    </location>
</feature>
<feature type="modified residue" description="Phosphoserine" evidence="13">
    <location>
        <position position="454"/>
    </location>
</feature>
<feature type="modified residue" description="Phosphothreonine" evidence="13">
    <location>
        <position position="467"/>
    </location>
</feature>
<feature type="modified residue" description="Phosphoserine" evidence="13">
    <location>
        <position position="594"/>
    </location>
</feature>
<feature type="cross-link" description="Glycyl lysine isopeptide (Lys-Gly) (interchain with G-Cter in SUMO2)" evidence="17">
    <location>
        <position position="24"/>
    </location>
</feature>
<feature type="cross-link" description="Glycyl lysine isopeptide (Lys-Gly) (interchain with G-Cter in SUMO2)" evidence="17">
    <location>
        <position position="30"/>
    </location>
</feature>
<feature type="cross-link" description="Glycyl lysine isopeptide (Lys-Gly) (interchain with G-Cter in SUMO2)" evidence="17">
    <location>
        <position position="161"/>
    </location>
</feature>
<feature type="cross-link" description="Glycyl lysine isopeptide (Lys-Gly) (interchain with G-Cter in SUMO)" evidence="12">
    <location>
        <position position="233"/>
    </location>
</feature>
<feature type="cross-link" description="Glycyl lysine isopeptide (Lys-Gly) (interchain with G-Cter in SUMO); alternate" evidence="12">
    <location>
        <position position="350"/>
    </location>
</feature>
<feature type="cross-link" description="Glycyl lysine isopeptide (Lys-Gly) (interchain with G-Cter in SUMO2); alternate" evidence="14 15 16 17">
    <location>
        <position position="350"/>
    </location>
</feature>
<feature type="cross-link" description="Glycyl lysine isopeptide (Lys-Gly) (interchain with G-Cter in SUMO2)" evidence="17">
    <location>
        <position position="475"/>
    </location>
</feature>
<feature type="cross-link" description="Glycyl lysine isopeptide (Lys-Gly) (interchain with G-Cter in SUMO2)" evidence="17">
    <location>
        <position position="724"/>
    </location>
</feature>
<feature type="splice variant" id="VSP_054416" description="In isoform 2." evidence="11">
    <location>
        <begin position="116"/>
        <end position="233"/>
    </location>
</feature>
<feature type="sequence variant" id="VAR_059320" description="In dbSNP:rs12619995.">
    <original>S</original>
    <variation>P</variation>
    <location>
        <position position="263"/>
    </location>
</feature>
<feature type="mutagenesis site" description="Reduced sumoylation, impaired nuclear localization, but enhanced transcription factor activity." evidence="8">
    <original>K</original>
    <variation>R</variation>
    <location>
        <position position="233"/>
    </location>
</feature>
<feature type="mutagenesis site" description="Reduced sumoylation, impaired nuclear localization, but enhanced transcription factor activity." evidence="8">
    <original>K</original>
    <variation>R</variation>
    <location>
        <position position="350"/>
    </location>
</feature>
<feature type="helix" evidence="19">
    <location>
        <begin position="364"/>
        <end position="375"/>
    </location>
</feature>
<feature type="helix" evidence="19">
    <location>
        <begin position="379"/>
        <end position="387"/>
    </location>
</feature>
<feature type="helix" evidence="19">
    <location>
        <begin position="391"/>
        <end position="399"/>
    </location>
</feature>
<feature type="turn" evidence="19">
    <location>
        <begin position="404"/>
        <end position="406"/>
    </location>
</feature>
<feature type="helix" evidence="19">
    <location>
        <begin position="409"/>
        <end position="421"/>
    </location>
</feature>
<feature type="helix" evidence="19">
    <location>
        <begin position="426"/>
        <end position="437"/>
    </location>
</feature>
<feature type="helix" evidence="20">
    <location>
        <begin position="486"/>
        <end position="498"/>
    </location>
</feature>
<feature type="helix" evidence="20">
    <location>
        <begin position="502"/>
        <end position="508"/>
    </location>
</feature>
<feature type="helix" evidence="20">
    <location>
        <begin position="514"/>
        <end position="523"/>
    </location>
</feature>
<feature type="helix" evidence="20">
    <location>
        <begin position="532"/>
        <end position="545"/>
    </location>
</feature>
<feature type="helix" evidence="20">
    <location>
        <begin position="549"/>
        <end position="559"/>
    </location>
</feature>
<feature type="helix" evidence="18">
    <location>
        <begin position="624"/>
        <end position="636"/>
    </location>
</feature>
<feature type="helix" evidence="18">
    <location>
        <begin position="642"/>
        <end position="651"/>
    </location>
</feature>
<feature type="helix" evidence="18">
    <location>
        <begin position="656"/>
        <end position="669"/>
    </location>
</feature>
<accession>Q9UPW6</accession>
<accession>A8K5Z8</accession>
<accession>Q3ZB87</accession>
<accession>Q4V763</accession>
<reference key="1">
    <citation type="journal article" date="1999" name="DNA Res.">
        <title>Prediction of the coding sequences of unidentified human genes. XIV. The complete sequences of 100 new cDNA clones from brain which code for large proteins in vitro.</title>
        <authorList>
            <person name="Kikuno R."/>
            <person name="Nagase T."/>
            <person name="Ishikawa K."/>
            <person name="Hirosawa M."/>
            <person name="Miyajima N."/>
            <person name="Tanaka A."/>
            <person name="Kotani H."/>
            <person name="Nomura N."/>
            <person name="Ohara O."/>
        </authorList>
    </citation>
    <scope>NUCLEOTIDE SEQUENCE [LARGE SCALE MRNA] (ISOFORM 1)</scope>
    <source>
        <tissue>Brain</tissue>
    </source>
</reference>
<reference key="2">
    <citation type="journal article" date="2004" name="Nat. Genet.">
        <title>Complete sequencing and characterization of 21,243 full-length human cDNAs.</title>
        <authorList>
            <person name="Ota T."/>
            <person name="Suzuki Y."/>
            <person name="Nishikawa T."/>
            <person name="Otsuki T."/>
            <person name="Sugiyama T."/>
            <person name="Irie R."/>
            <person name="Wakamatsu A."/>
            <person name="Hayashi K."/>
            <person name="Sato H."/>
            <person name="Nagai K."/>
            <person name="Kimura K."/>
            <person name="Makita H."/>
            <person name="Sekine M."/>
            <person name="Obayashi M."/>
            <person name="Nishi T."/>
            <person name="Shibahara T."/>
            <person name="Tanaka T."/>
            <person name="Ishii S."/>
            <person name="Yamamoto J."/>
            <person name="Saito K."/>
            <person name="Kawai Y."/>
            <person name="Isono Y."/>
            <person name="Nakamura Y."/>
            <person name="Nagahari K."/>
            <person name="Murakami K."/>
            <person name="Yasuda T."/>
            <person name="Iwayanagi T."/>
            <person name="Wagatsuma M."/>
            <person name="Shiratori A."/>
            <person name="Sudo H."/>
            <person name="Hosoiri T."/>
            <person name="Kaku Y."/>
            <person name="Kodaira H."/>
            <person name="Kondo H."/>
            <person name="Sugawara M."/>
            <person name="Takahashi M."/>
            <person name="Kanda K."/>
            <person name="Yokoi T."/>
            <person name="Furuya T."/>
            <person name="Kikkawa E."/>
            <person name="Omura Y."/>
            <person name="Abe K."/>
            <person name="Kamihara K."/>
            <person name="Katsuta N."/>
            <person name="Sato K."/>
            <person name="Tanikawa M."/>
            <person name="Yamazaki M."/>
            <person name="Ninomiya K."/>
            <person name="Ishibashi T."/>
            <person name="Yamashita H."/>
            <person name="Murakawa K."/>
            <person name="Fujimori K."/>
            <person name="Tanai H."/>
            <person name="Kimata M."/>
            <person name="Watanabe M."/>
            <person name="Hiraoka S."/>
            <person name="Chiba Y."/>
            <person name="Ishida S."/>
            <person name="Ono Y."/>
            <person name="Takiguchi S."/>
            <person name="Watanabe S."/>
            <person name="Yosida M."/>
            <person name="Hotuta T."/>
            <person name="Kusano J."/>
            <person name="Kanehori K."/>
            <person name="Takahashi-Fujii A."/>
            <person name="Hara H."/>
            <person name="Tanase T.-O."/>
            <person name="Nomura Y."/>
            <person name="Togiya S."/>
            <person name="Komai F."/>
            <person name="Hara R."/>
            <person name="Takeuchi K."/>
            <person name="Arita M."/>
            <person name="Imose N."/>
            <person name="Musashino K."/>
            <person name="Yuuki H."/>
            <person name="Oshima A."/>
            <person name="Sasaki N."/>
            <person name="Aotsuka S."/>
            <person name="Yoshikawa Y."/>
            <person name="Matsunawa H."/>
            <person name="Ichihara T."/>
            <person name="Shiohata N."/>
            <person name="Sano S."/>
            <person name="Moriya S."/>
            <person name="Momiyama H."/>
            <person name="Satoh N."/>
            <person name="Takami S."/>
            <person name="Terashima Y."/>
            <person name="Suzuki O."/>
            <person name="Nakagawa S."/>
            <person name="Senoh A."/>
            <person name="Mizoguchi H."/>
            <person name="Goto Y."/>
            <person name="Shimizu F."/>
            <person name="Wakebe H."/>
            <person name="Hishigaki H."/>
            <person name="Watanabe T."/>
            <person name="Sugiyama A."/>
            <person name="Takemoto M."/>
            <person name="Kawakami B."/>
            <person name="Yamazaki M."/>
            <person name="Watanabe K."/>
            <person name="Kumagai A."/>
            <person name="Itakura S."/>
            <person name="Fukuzumi Y."/>
            <person name="Fujimori Y."/>
            <person name="Komiyama M."/>
            <person name="Tashiro H."/>
            <person name="Tanigami A."/>
            <person name="Fujiwara T."/>
            <person name="Ono T."/>
            <person name="Yamada K."/>
            <person name="Fujii Y."/>
            <person name="Ozaki K."/>
            <person name="Hirao M."/>
            <person name="Ohmori Y."/>
            <person name="Kawabata A."/>
            <person name="Hikiji T."/>
            <person name="Kobatake N."/>
            <person name="Inagaki H."/>
            <person name="Ikema Y."/>
            <person name="Okamoto S."/>
            <person name="Okitani R."/>
            <person name="Kawakami T."/>
            <person name="Noguchi S."/>
            <person name="Itoh T."/>
            <person name="Shigeta K."/>
            <person name="Senba T."/>
            <person name="Matsumura K."/>
            <person name="Nakajima Y."/>
            <person name="Mizuno T."/>
            <person name="Morinaga M."/>
            <person name="Sasaki M."/>
            <person name="Togashi T."/>
            <person name="Oyama M."/>
            <person name="Hata H."/>
            <person name="Watanabe M."/>
            <person name="Komatsu T."/>
            <person name="Mizushima-Sugano J."/>
            <person name="Satoh T."/>
            <person name="Shirai Y."/>
            <person name="Takahashi Y."/>
            <person name="Nakagawa K."/>
            <person name="Okumura K."/>
            <person name="Nagase T."/>
            <person name="Nomura N."/>
            <person name="Kikuchi H."/>
            <person name="Masuho Y."/>
            <person name="Yamashita R."/>
            <person name="Nakai K."/>
            <person name="Yada T."/>
            <person name="Nakamura Y."/>
            <person name="Ohara O."/>
            <person name="Isogai T."/>
            <person name="Sugano S."/>
        </authorList>
    </citation>
    <scope>NUCLEOTIDE SEQUENCE [LARGE SCALE MRNA] (ISOFORM 1)</scope>
    <source>
        <tissue>Brain</tissue>
    </source>
</reference>
<reference key="3">
    <citation type="journal article" date="2005" name="Nature">
        <title>Generation and annotation of the DNA sequences of human chromosomes 2 and 4.</title>
        <authorList>
            <person name="Hillier L.W."/>
            <person name="Graves T.A."/>
            <person name="Fulton R.S."/>
            <person name="Fulton L.A."/>
            <person name="Pepin K.H."/>
            <person name="Minx P."/>
            <person name="Wagner-McPherson C."/>
            <person name="Layman D."/>
            <person name="Wylie K."/>
            <person name="Sekhon M."/>
            <person name="Becker M.C."/>
            <person name="Fewell G.A."/>
            <person name="Delehaunty K.D."/>
            <person name="Miner T.L."/>
            <person name="Nash W.E."/>
            <person name="Kremitzki C."/>
            <person name="Oddy L."/>
            <person name="Du H."/>
            <person name="Sun H."/>
            <person name="Bradshaw-Cordum H."/>
            <person name="Ali J."/>
            <person name="Carter J."/>
            <person name="Cordes M."/>
            <person name="Harris A."/>
            <person name="Isak A."/>
            <person name="van Brunt A."/>
            <person name="Nguyen C."/>
            <person name="Du F."/>
            <person name="Courtney L."/>
            <person name="Kalicki J."/>
            <person name="Ozersky P."/>
            <person name="Abbott S."/>
            <person name="Armstrong J."/>
            <person name="Belter E.A."/>
            <person name="Caruso L."/>
            <person name="Cedroni M."/>
            <person name="Cotton M."/>
            <person name="Davidson T."/>
            <person name="Desai A."/>
            <person name="Elliott G."/>
            <person name="Erb T."/>
            <person name="Fronick C."/>
            <person name="Gaige T."/>
            <person name="Haakenson W."/>
            <person name="Haglund K."/>
            <person name="Holmes A."/>
            <person name="Harkins R."/>
            <person name="Kim K."/>
            <person name="Kruchowski S.S."/>
            <person name="Strong C.M."/>
            <person name="Grewal N."/>
            <person name="Goyea E."/>
            <person name="Hou S."/>
            <person name="Levy A."/>
            <person name="Martinka S."/>
            <person name="Mead K."/>
            <person name="McLellan M.D."/>
            <person name="Meyer R."/>
            <person name="Randall-Maher J."/>
            <person name="Tomlinson C."/>
            <person name="Dauphin-Kohlberg S."/>
            <person name="Kozlowicz-Reilly A."/>
            <person name="Shah N."/>
            <person name="Swearengen-Shahid S."/>
            <person name="Snider J."/>
            <person name="Strong J.T."/>
            <person name="Thompson J."/>
            <person name="Yoakum M."/>
            <person name="Leonard S."/>
            <person name="Pearman C."/>
            <person name="Trani L."/>
            <person name="Radionenko M."/>
            <person name="Waligorski J.E."/>
            <person name="Wang C."/>
            <person name="Rock S.M."/>
            <person name="Tin-Wollam A.-M."/>
            <person name="Maupin R."/>
            <person name="Latreille P."/>
            <person name="Wendl M.C."/>
            <person name="Yang S.-P."/>
            <person name="Pohl C."/>
            <person name="Wallis J.W."/>
            <person name="Spieth J."/>
            <person name="Bieri T.A."/>
            <person name="Berkowicz N."/>
            <person name="Nelson J.O."/>
            <person name="Osborne J."/>
            <person name="Ding L."/>
            <person name="Meyer R."/>
            <person name="Sabo A."/>
            <person name="Shotland Y."/>
            <person name="Sinha P."/>
            <person name="Wohldmann P.E."/>
            <person name="Cook L.L."/>
            <person name="Hickenbotham M.T."/>
            <person name="Eldred J."/>
            <person name="Williams D."/>
            <person name="Jones T.A."/>
            <person name="She X."/>
            <person name="Ciccarelli F.D."/>
            <person name="Izaurralde E."/>
            <person name="Taylor J."/>
            <person name="Schmutz J."/>
            <person name="Myers R.M."/>
            <person name="Cox D.R."/>
            <person name="Huang X."/>
            <person name="McPherson J.D."/>
            <person name="Mardis E.R."/>
            <person name="Clifton S.W."/>
            <person name="Warren W.C."/>
            <person name="Chinwalla A.T."/>
            <person name="Eddy S.R."/>
            <person name="Marra M.A."/>
            <person name="Ovcharenko I."/>
            <person name="Furey T.S."/>
            <person name="Miller W."/>
            <person name="Eichler E.E."/>
            <person name="Bork P."/>
            <person name="Suyama M."/>
            <person name="Torrents D."/>
            <person name="Waterston R.H."/>
            <person name="Wilson R.K."/>
        </authorList>
    </citation>
    <scope>NUCLEOTIDE SEQUENCE [LARGE SCALE GENOMIC DNA]</scope>
</reference>
<reference key="4">
    <citation type="submission" date="2005-07" db="EMBL/GenBank/DDBJ databases">
        <authorList>
            <person name="Mural R.J."/>
            <person name="Istrail S."/>
            <person name="Sutton G.G."/>
            <person name="Florea L."/>
            <person name="Halpern A.L."/>
            <person name="Mobarry C.M."/>
            <person name="Lippert R."/>
            <person name="Walenz B."/>
            <person name="Shatkay H."/>
            <person name="Dew I."/>
            <person name="Miller J.R."/>
            <person name="Flanigan M.J."/>
            <person name="Edwards N.J."/>
            <person name="Bolanos R."/>
            <person name="Fasulo D."/>
            <person name="Halldorsson B.V."/>
            <person name="Hannenhalli S."/>
            <person name="Turner R."/>
            <person name="Yooseph S."/>
            <person name="Lu F."/>
            <person name="Nusskern D.R."/>
            <person name="Shue B.C."/>
            <person name="Zheng X.H."/>
            <person name="Zhong F."/>
            <person name="Delcher A.L."/>
            <person name="Huson D.H."/>
            <person name="Kravitz S.A."/>
            <person name="Mouchard L."/>
            <person name="Reinert K."/>
            <person name="Remington K.A."/>
            <person name="Clark A.G."/>
            <person name="Waterman M.S."/>
            <person name="Eichler E.E."/>
            <person name="Adams M.D."/>
            <person name="Hunkapiller M.W."/>
            <person name="Myers E.W."/>
            <person name="Venter J.C."/>
        </authorList>
    </citation>
    <scope>NUCLEOTIDE SEQUENCE [LARGE SCALE GENOMIC DNA]</scope>
</reference>
<reference key="5">
    <citation type="journal article" date="2004" name="Genome Res.">
        <title>The status, quality, and expansion of the NIH full-length cDNA project: the Mammalian Gene Collection (MGC).</title>
        <authorList>
            <consortium name="The MGC Project Team"/>
        </authorList>
    </citation>
    <scope>NUCLEOTIDE SEQUENCE [LARGE SCALE MRNA] (ISOFORMS 1 AND 2)</scope>
</reference>
<reference key="6">
    <citation type="journal article" date="2003" name="Genes Dev.">
        <title>SUMO modification of a novel MAR-binding protein, SATB2, modulates immunoglobulin mu gene expression.</title>
        <authorList>
            <person name="Dobreva G."/>
            <person name="Dambacher J."/>
            <person name="Grosschedl R."/>
        </authorList>
    </citation>
    <scope>FUNCTION</scope>
    <scope>INTERACTION WITH PIAS1</scope>
    <scope>TISSUE SPECIFICITY</scope>
    <scope>SUBCELLULAR LOCATION</scope>
    <scope>MUTAGENESIS OF LYS-233 AND LYS-350</scope>
    <scope>SUMOYLATION</scope>
</reference>
<reference key="7">
    <citation type="journal article" date="2003" name="Hum. Mol. Genet.">
        <title>Identification of SATB2 as the cleft palate gene on 2q32-q33.</title>
        <authorList>
            <person name="FitzPatrick D.R."/>
            <person name="Carr I.M."/>
            <person name="McLaren L."/>
            <person name="Leek J.P."/>
            <person name="Wightman P."/>
            <person name="Williamson K."/>
            <person name="Gautier P."/>
            <person name="McGill N."/>
            <person name="Hayward C."/>
            <person name="Firth H."/>
            <person name="Markham A.F."/>
            <person name="Fantes J.A."/>
            <person name="Bonthron D.T."/>
        </authorList>
    </citation>
    <scope>INVOLVEMENT IN CPI</scope>
    <scope>CHROMOSOMAL TRANSLOCATIONS</scope>
</reference>
<reference key="8">
    <citation type="journal article" date="2007" name="Hum. Mutat.">
        <title>Heterozygous nonsense mutation SATB2 associated with cleft palate, osteoporosis, and cognitive defects.</title>
        <authorList>
            <person name="Leoyklang P."/>
            <person name="Suphapeetiporn K."/>
            <person name="Siriwan P."/>
            <person name="Desudchit T."/>
            <person name="Chaowanapanja P."/>
            <person name="Gahl W.A."/>
            <person name="Shotelersuk V."/>
        </authorList>
    </citation>
    <scope>INVOLVEMENT IN CPI</scope>
</reference>
<reference key="9">
    <citation type="journal article" date="2009" name="Clin. Genet.">
        <title>Toriello-Carey syndrome in a patient with a de novo balanced translocation [46,XY,t(2;14)(q33;q22)] interrupting SATB2.</title>
        <authorList>
            <person name="Tegay D.H."/>
            <person name="Chan K.K."/>
            <person name="Leung L."/>
            <person name="Wang C."/>
            <person name="Burkett S."/>
            <person name="Stone G."/>
            <person name="Stanyon R."/>
            <person name="Toriello H.V."/>
            <person name="Hatchwell E."/>
        </authorList>
    </citation>
    <scope>CHROMOSOMAL TRANSLOCATION</scope>
</reference>
<reference key="10">
    <citation type="journal article" date="2013" name="J. Proteome Res.">
        <title>Toward a comprehensive characterization of a human cancer cell phosphoproteome.</title>
        <authorList>
            <person name="Zhou H."/>
            <person name="Di Palma S."/>
            <person name="Preisinger C."/>
            <person name="Peng M."/>
            <person name="Polat A.N."/>
            <person name="Heck A.J."/>
            <person name="Mohammed S."/>
        </authorList>
    </citation>
    <scope>PHOSPHORYLATION [LARGE SCALE ANALYSIS] AT SER-20; SER-39; SER-454; THR-467 AND SER-594</scope>
    <scope>IDENTIFICATION BY MASS SPECTROMETRY [LARGE SCALE ANALYSIS]</scope>
    <source>
        <tissue>Cervix carcinoma</tissue>
        <tissue>Erythroleukemia</tissue>
    </source>
</reference>
<reference key="11">
    <citation type="journal article" date="2014" name="Nat. Struct. Mol. Biol.">
        <title>Uncovering global SUMOylation signaling networks in a site-specific manner.</title>
        <authorList>
            <person name="Hendriks I.A."/>
            <person name="D'Souza R.C."/>
            <person name="Yang B."/>
            <person name="Verlaan-de Vries M."/>
            <person name="Mann M."/>
            <person name="Vertegaal A.C."/>
        </authorList>
    </citation>
    <scope>SUMOYLATION [LARGE SCALE ANALYSIS] AT LYS-350</scope>
    <scope>IDENTIFICATION BY MASS SPECTROMETRY [LARGE SCALE ANALYSIS]</scope>
</reference>
<reference key="12">
    <citation type="journal article" date="2015" name="Cell Rep.">
        <title>SUMO-2 orchestrates chromatin modifiers in response to DNA damage.</title>
        <authorList>
            <person name="Hendriks I.A."/>
            <person name="Treffers L.W."/>
            <person name="Verlaan-de Vries M."/>
            <person name="Olsen J.V."/>
            <person name="Vertegaal A.C."/>
        </authorList>
    </citation>
    <scope>SUMOYLATION [LARGE SCALE ANALYSIS] AT LYS-350</scope>
    <scope>IDENTIFICATION BY MASS SPECTROMETRY [LARGE SCALE ANALYSIS]</scope>
</reference>
<reference key="13">
    <citation type="journal article" date="2015" name="Mol. Cell. Proteomics">
        <title>System-wide analysis of SUMOylation dynamics in response to replication stress reveals novel small ubiquitin-like modified target proteins and acceptor lysines relevant for genome stability.</title>
        <authorList>
            <person name="Xiao Z."/>
            <person name="Chang J.G."/>
            <person name="Hendriks I.A."/>
            <person name="Sigurdsson J.O."/>
            <person name="Olsen J.V."/>
            <person name="Vertegaal A.C."/>
        </authorList>
    </citation>
    <scope>SUMOYLATION [LARGE SCALE ANALYSIS] AT LYS-350</scope>
    <scope>IDENTIFICATION BY MASS SPECTROMETRY [LARGE SCALE ANALYSIS]</scope>
</reference>
<reference key="14">
    <citation type="journal article" date="2017" name="Nat. Struct. Mol. Biol.">
        <title>Site-specific mapping of the human SUMO proteome reveals co-modification with phosphorylation.</title>
        <authorList>
            <person name="Hendriks I.A."/>
            <person name="Lyon D."/>
            <person name="Young C."/>
            <person name="Jensen L.J."/>
            <person name="Vertegaal A.C."/>
            <person name="Nielsen M.L."/>
        </authorList>
    </citation>
    <scope>SUMOYLATION [LARGE SCALE ANALYSIS] AT LYS-24; LYS-30; LYS-161; LYS-350; LYS-475 AND LYS-724</scope>
    <scope>IDENTIFICATION BY MASS SPECTROMETRY [LARGE SCALE ANALYSIS]</scope>
</reference>
<reference key="15">
    <citation type="submission" date="2009-02" db="PDB data bank">
        <title>Solution structure of the homeodomain of KIAA1034 protein.</title>
        <authorList>
            <consortium name="RIKEN structural genomics initiative (RSGI)"/>
        </authorList>
    </citation>
    <scope>STRUCTURE BY NMR OF 615-674</scope>
</reference>
<reference key="16">
    <citation type="submission" date="2009-02" db="PDB data bank">
        <title>Solution structure of the first CUT domain of KIAA1034 protein.</title>
        <authorList>
            <consortium name="RIKEN structural genomics initiative (RSGI)"/>
        </authorList>
    </citation>
    <scope>STRUCTURE BY NMR OF 350-437</scope>
</reference>
<reference key="17">
    <citation type="submission" date="2009-02" db="PDB data bank">
        <title>Solution structure of the second CUT domain of human SATB2.</title>
        <authorList>
            <consortium name="RIKEN structural genomics initiative (RSGI)"/>
        </authorList>
    </citation>
    <scope>STRUCTURE BY NMR OF 473-560</scope>
</reference>
<dbReference type="EMBL" id="AB028957">
    <property type="protein sequence ID" value="BAA82986.1"/>
    <property type="status" value="ALT_INIT"/>
    <property type="molecule type" value="mRNA"/>
</dbReference>
<dbReference type="EMBL" id="AK291463">
    <property type="protein sequence ID" value="BAF84152.1"/>
    <property type="molecule type" value="mRNA"/>
</dbReference>
<dbReference type="EMBL" id="AC016746">
    <property type="status" value="NOT_ANNOTATED_CDS"/>
    <property type="molecule type" value="Genomic_DNA"/>
</dbReference>
<dbReference type="EMBL" id="AC017096">
    <property type="status" value="NOT_ANNOTATED_CDS"/>
    <property type="molecule type" value="Genomic_DNA"/>
</dbReference>
<dbReference type="EMBL" id="CH471063">
    <property type="protein sequence ID" value="EAW70180.1"/>
    <property type="molecule type" value="Genomic_DNA"/>
</dbReference>
<dbReference type="EMBL" id="BC098136">
    <property type="protein sequence ID" value="AAH98136.1"/>
    <property type="molecule type" value="mRNA"/>
</dbReference>
<dbReference type="EMBL" id="BC099723">
    <property type="protein sequence ID" value="AAH99723.1"/>
    <property type="molecule type" value="mRNA"/>
</dbReference>
<dbReference type="EMBL" id="BC103492">
    <property type="protein sequence ID" value="AAI03493.1"/>
    <property type="molecule type" value="mRNA"/>
</dbReference>
<dbReference type="EMBL" id="BC103500">
    <property type="protein sequence ID" value="AAI03501.1"/>
    <property type="molecule type" value="mRNA"/>
</dbReference>
<dbReference type="CCDS" id="CCDS2327.1">
    <molecule id="Q9UPW6-1"/>
</dbReference>
<dbReference type="RefSeq" id="NP_001165980.1">
    <molecule id="Q9UPW6-1"/>
    <property type="nucleotide sequence ID" value="NM_001172509.2"/>
</dbReference>
<dbReference type="RefSeq" id="NP_001165988.1">
    <molecule id="Q9UPW6-1"/>
    <property type="nucleotide sequence ID" value="NM_001172517.1"/>
</dbReference>
<dbReference type="RefSeq" id="NP_056080.1">
    <molecule id="Q9UPW6-1"/>
    <property type="nucleotide sequence ID" value="NM_015265.4"/>
</dbReference>
<dbReference type="RefSeq" id="XP_006712435.1">
    <property type="nucleotide sequence ID" value="XM_006712372.2"/>
</dbReference>
<dbReference type="RefSeq" id="XP_011509142.1">
    <property type="nucleotide sequence ID" value="XM_011510840.2"/>
</dbReference>
<dbReference type="RefSeq" id="XP_047299731.1">
    <molecule id="Q9UPW6-1"/>
    <property type="nucleotide sequence ID" value="XM_047443775.1"/>
</dbReference>
<dbReference type="RefSeq" id="XP_054197095.1">
    <molecule id="Q9UPW6-1"/>
    <property type="nucleotide sequence ID" value="XM_054341120.1"/>
</dbReference>
<dbReference type="PDB" id="1WI3">
    <property type="method" value="NMR"/>
    <property type="chains" value="A=615-672"/>
</dbReference>
<dbReference type="PDB" id="1WIZ">
    <property type="method" value="NMR"/>
    <property type="chains" value="A=350-437"/>
</dbReference>
<dbReference type="PDB" id="2CSF">
    <property type="method" value="NMR"/>
    <property type="chains" value="A=473-560"/>
</dbReference>
<dbReference type="PDBsum" id="1WI3"/>
<dbReference type="PDBsum" id="1WIZ"/>
<dbReference type="PDBsum" id="2CSF"/>
<dbReference type="SMR" id="Q9UPW6"/>
<dbReference type="BioGRID" id="116905">
    <property type="interactions" value="175"/>
</dbReference>
<dbReference type="DIP" id="DIP-60551N"/>
<dbReference type="ELM" id="Q9UPW6"/>
<dbReference type="FunCoup" id="Q9UPW6">
    <property type="interactions" value="991"/>
</dbReference>
<dbReference type="IntAct" id="Q9UPW6">
    <property type="interactions" value="125"/>
</dbReference>
<dbReference type="MINT" id="Q9UPW6"/>
<dbReference type="STRING" id="9606.ENSP00000401112"/>
<dbReference type="GlyGen" id="Q9UPW6">
    <property type="glycosylation" value="4 sites, 1 N-linked glycan (1 site), 1 O-linked glycan (3 sites)"/>
</dbReference>
<dbReference type="iPTMnet" id="Q9UPW6"/>
<dbReference type="PhosphoSitePlus" id="Q9UPW6"/>
<dbReference type="BioMuta" id="SATB2"/>
<dbReference type="DMDM" id="13634020"/>
<dbReference type="jPOST" id="Q9UPW6"/>
<dbReference type="MassIVE" id="Q9UPW6"/>
<dbReference type="PaxDb" id="9606-ENSP00000401112"/>
<dbReference type="PeptideAtlas" id="Q9UPW6"/>
<dbReference type="ProteomicsDB" id="61903"/>
<dbReference type="ProteomicsDB" id="85463">
    <molecule id="Q9UPW6-1"/>
</dbReference>
<dbReference type="Pumba" id="Q9UPW6"/>
<dbReference type="Antibodypedia" id="19915">
    <property type="antibodies" value="409 antibodies from 41 providers"/>
</dbReference>
<dbReference type="DNASU" id="23314"/>
<dbReference type="Ensembl" id="ENST00000260926.9">
    <molecule id="Q9UPW6-1"/>
    <property type="protein sequence ID" value="ENSP00000260926.5"/>
    <property type="gene ID" value="ENSG00000119042.18"/>
</dbReference>
<dbReference type="Ensembl" id="ENST00000417098.6">
    <molecule id="Q9UPW6-1"/>
    <property type="protein sequence ID" value="ENSP00000401112.1"/>
    <property type="gene ID" value="ENSG00000119042.18"/>
</dbReference>
<dbReference type="Ensembl" id="ENST00000428695.6">
    <molecule id="Q9UPW6-2"/>
    <property type="protein sequence ID" value="ENSP00000388581.1"/>
    <property type="gene ID" value="ENSG00000119042.18"/>
</dbReference>
<dbReference type="Ensembl" id="ENST00000457245.5">
    <molecule id="Q9UPW6-1"/>
    <property type="protein sequence ID" value="ENSP00000405420.1"/>
    <property type="gene ID" value="ENSG00000119042.18"/>
</dbReference>
<dbReference type="Ensembl" id="ENST00000700191.1">
    <molecule id="Q9UPW6-2"/>
    <property type="protein sequence ID" value="ENSP00000514853.1"/>
    <property type="gene ID" value="ENSG00000119042.18"/>
</dbReference>
<dbReference type="Ensembl" id="ENST00000700193.1">
    <molecule id="Q9UPW6-1"/>
    <property type="protein sequence ID" value="ENSP00000514854.1"/>
    <property type="gene ID" value="ENSG00000119042.18"/>
</dbReference>
<dbReference type="GeneID" id="23314"/>
<dbReference type="KEGG" id="hsa:23314"/>
<dbReference type="MANE-Select" id="ENST00000417098.6">
    <property type="protein sequence ID" value="ENSP00000401112.1"/>
    <property type="RefSeq nucleotide sequence ID" value="NM_001172509.2"/>
    <property type="RefSeq protein sequence ID" value="NP_001165980.1"/>
</dbReference>
<dbReference type="UCSC" id="uc002uuy.2">
    <molecule id="Q9UPW6-1"/>
    <property type="organism name" value="human"/>
</dbReference>
<dbReference type="AGR" id="HGNC:21637"/>
<dbReference type="CTD" id="23314"/>
<dbReference type="DisGeNET" id="23314"/>
<dbReference type="GeneCards" id="SATB2"/>
<dbReference type="GeneReviews" id="SATB2"/>
<dbReference type="HGNC" id="HGNC:21637">
    <property type="gene designation" value="SATB2"/>
</dbReference>
<dbReference type="HPA" id="ENSG00000119042">
    <property type="expression patterns" value="Group enriched (brain, intestine)"/>
</dbReference>
<dbReference type="MalaCards" id="SATB2"/>
<dbReference type="MIM" id="119540">
    <property type="type" value="phenotype"/>
</dbReference>
<dbReference type="MIM" id="608148">
    <property type="type" value="gene"/>
</dbReference>
<dbReference type="neXtProt" id="NX_Q9UPW6"/>
<dbReference type="OpenTargets" id="ENSG00000119042"/>
<dbReference type="Orphanet" id="251019">
    <property type="disease" value="2q32q33 deletion syndrome"/>
</dbReference>
<dbReference type="Orphanet" id="251028">
    <property type="disease" value="SATB2-associated syndrome due to a chromosomal rearrangement"/>
</dbReference>
<dbReference type="Orphanet" id="576283">
    <property type="disease" value="SATB2-associated syndrome due to a pathogenic variant"/>
</dbReference>
<dbReference type="PharmGKB" id="PA128394624"/>
<dbReference type="VEuPathDB" id="HostDB:ENSG00000119042"/>
<dbReference type="eggNOG" id="KOG3755">
    <property type="taxonomic scope" value="Eukaryota"/>
</dbReference>
<dbReference type="GeneTree" id="ENSGT00390000008096"/>
<dbReference type="HOGENOM" id="CLU_012559_1_0_1"/>
<dbReference type="InParanoid" id="Q9UPW6"/>
<dbReference type="OMA" id="YCDLPVG"/>
<dbReference type="OrthoDB" id="10052721at2759"/>
<dbReference type="PAN-GO" id="Q9UPW6">
    <property type="GO annotations" value="4 GO annotations based on evolutionary models"/>
</dbReference>
<dbReference type="PhylomeDB" id="Q9UPW6"/>
<dbReference type="TreeFam" id="TF332714"/>
<dbReference type="PathwayCommons" id="Q9UPW6"/>
<dbReference type="Reactome" id="R-HSA-4551638">
    <property type="pathway name" value="SUMOylation of chromatin organization proteins"/>
</dbReference>
<dbReference type="Reactome" id="R-HSA-8940973">
    <property type="pathway name" value="RUNX2 regulates osteoblast differentiation"/>
</dbReference>
<dbReference type="SignaLink" id="Q9UPW6"/>
<dbReference type="SIGNOR" id="Q9UPW6"/>
<dbReference type="BioGRID-ORCS" id="23314">
    <property type="hits" value="19 hits in 1176 CRISPR screens"/>
</dbReference>
<dbReference type="ChiTaRS" id="SATB2">
    <property type="organism name" value="human"/>
</dbReference>
<dbReference type="EvolutionaryTrace" id="Q9UPW6"/>
<dbReference type="GeneWiki" id="SATB2"/>
<dbReference type="GenomeRNAi" id="23314"/>
<dbReference type="Pharos" id="Q9UPW6">
    <property type="development level" value="Tbio"/>
</dbReference>
<dbReference type="PRO" id="PR:Q9UPW6"/>
<dbReference type="Proteomes" id="UP000005640">
    <property type="component" value="Chromosome 2"/>
</dbReference>
<dbReference type="RNAct" id="Q9UPW6">
    <property type="molecule type" value="protein"/>
</dbReference>
<dbReference type="Bgee" id="ENSG00000119042">
    <property type="expression patterns" value="Expressed in periodontal ligament and 149 other cell types or tissues"/>
</dbReference>
<dbReference type="ExpressionAtlas" id="Q9UPW6">
    <property type="expression patterns" value="baseline and differential"/>
</dbReference>
<dbReference type="GO" id="GO:0000785">
    <property type="term" value="C:chromatin"/>
    <property type="evidence" value="ECO:0000247"/>
    <property type="project" value="NTNU_SB"/>
</dbReference>
<dbReference type="GO" id="GO:0000118">
    <property type="term" value="C:histone deacetylase complex"/>
    <property type="evidence" value="ECO:0007669"/>
    <property type="project" value="Ensembl"/>
</dbReference>
<dbReference type="GO" id="GO:0016363">
    <property type="term" value="C:nuclear matrix"/>
    <property type="evidence" value="ECO:0007669"/>
    <property type="project" value="UniProtKB-SubCell"/>
</dbReference>
<dbReference type="GO" id="GO:0005654">
    <property type="term" value="C:nucleoplasm"/>
    <property type="evidence" value="ECO:0000314"/>
    <property type="project" value="HPA"/>
</dbReference>
<dbReference type="GO" id="GO:0005667">
    <property type="term" value="C:transcription regulator complex"/>
    <property type="evidence" value="ECO:0007669"/>
    <property type="project" value="Ensembl"/>
</dbReference>
<dbReference type="GO" id="GO:0003682">
    <property type="term" value="F:chromatin binding"/>
    <property type="evidence" value="ECO:0007669"/>
    <property type="project" value="Ensembl"/>
</dbReference>
<dbReference type="GO" id="GO:0001228">
    <property type="term" value="F:DNA-binding transcription activator activity, RNA polymerase II-specific"/>
    <property type="evidence" value="ECO:0000314"/>
    <property type="project" value="NTNU_SB"/>
</dbReference>
<dbReference type="GO" id="GO:0000981">
    <property type="term" value="F:DNA-binding transcription factor activity, RNA polymerase II-specific"/>
    <property type="evidence" value="ECO:0000247"/>
    <property type="project" value="NTNU_SB"/>
</dbReference>
<dbReference type="GO" id="GO:0042826">
    <property type="term" value="F:histone deacetylase binding"/>
    <property type="evidence" value="ECO:0000250"/>
    <property type="project" value="ARUK-UCL"/>
</dbReference>
<dbReference type="GO" id="GO:0000978">
    <property type="term" value="F:RNA polymerase II cis-regulatory region sequence-specific DNA binding"/>
    <property type="evidence" value="ECO:0000318"/>
    <property type="project" value="GO_Central"/>
</dbReference>
<dbReference type="GO" id="GO:0000977">
    <property type="term" value="F:RNA polymerase II transcription regulatory region sequence-specific DNA binding"/>
    <property type="evidence" value="ECO:0000314"/>
    <property type="project" value="NTNU_SB"/>
</dbReference>
<dbReference type="GO" id="GO:0051216">
    <property type="term" value="P:cartilage development"/>
    <property type="evidence" value="ECO:0007669"/>
    <property type="project" value="Ensembl"/>
</dbReference>
<dbReference type="GO" id="GO:0006338">
    <property type="term" value="P:chromatin remodeling"/>
    <property type="evidence" value="ECO:0000318"/>
    <property type="project" value="GO_Central"/>
</dbReference>
<dbReference type="GO" id="GO:0009880">
    <property type="term" value="P:embryonic pattern specification"/>
    <property type="evidence" value="ECO:0007669"/>
    <property type="project" value="Ensembl"/>
</dbReference>
<dbReference type="GO" id="GO:0048704">
    <property type="term" value="P:embryonic skeletal system morphogenesis"/>
    <property type="evidence" value="ECO:0007669"/>
    <property type="project" value="Ensembl"/>
</dbReference>
<dbReference type="GO" id="GO:0000122">
    <property type="term" value="P:negative regulation of transcription by RNA polymerase II"/>
    <property type="evidence" value="ECO:0007669"/>
    <property type="project" value="Ensembl"/>
</dbReference>
<dbReference type="GO" id="GO:0001764">
    <property type="term" value="P:neuron migration"/>
    <property type="evidence" value="ECO:0007669"/>
    <property type="project" value="Ensembl"/>
</dbReference>
<dbReference type="GO" id="GO:0002076">
    <property type="term" value="P:osteoblast development"/>
    <property type="evidence" value="ECO:0007669"/>
    <property type="project" value="Ensembl"/>
</dbReference>
<dbReference type="GO" id="GO:0045944">
    <property type="term" value="P:positive regulation of transcription by RNA polymerase II"/>
    <property type="evidence" value="ECO:0000314"/>
    <property type="project" value="NTNU_SB"/>
</dbReference>
<dbReference type="GO" id="GO:0006357">
    <property type="term" value="P:regulation of transcription by RNA polymerase II"/>
    <property type="evidence" value="ECO:0000318"/>
    <property type="project" value="GO_Central"/>
</dbReference>
<dbReference type="GO" id="GO:0060021">
    <property type="term" value="P:roof of mouth development"/>
    <property type="evidence" value="ECO:0007669"/>
    <property type="project" value="Ensembl"/>
</dbReference>
<dbReference type="CDD" id="cd00086">
    <property type="entry name" value="homeodomain"/>
    <property type="match status" value="1"/>
</dbReference>
<dbReference type="CDD" id="cd11585">
    <property type="entry name" value="SATB1_N"/>
    <property type="match status" value="1"/>
</dbReference>
<dbReference type="FunFam" id="1.10.10.60:FF:000070">
    <property type="entry name" value="DNA-binding protein SATB"/>
    <property type="match status" value="1"/>
</dbReference>
<dbReference type="FunFam" id="1.10.260.40:FF:000003">
    <property type="entry name" value="DNA-binding protein SATB"/>
    <property type="match status" value="2"/>
</dbReference>
<dbReference type="FunFam" id="1.10.260.70:FF:000001">
    <property type="entry name" value="DNA-binding protein SATB"/>
    <property type="match status" value="1"/>
</dbReference>
<dbReference type="FunFam" id="3.10.20.710:FF:000001">
    <property type="entry name" value="DNA-binding protein SATB"/>
    <property type="match status" value="1"/>
</dbReference>
<dbReference type="Gene3D" id="1.10.10.60">
    <property type="entry name" value="Homeodomain-like"/>
    <property type="match status" value="1"/>
</dbReference>
<dbReference type="Gene3D" id="1.10.260.40">
    <property type="entry name" value="lambda repressor-like DNA-binding domains"/>
    <property type="match status" value="2"/>
</dbReference>
<dbReference type="Gene3D" id="1.10.260.70">
    <property type="entry name" value="SATB, CULT domain"/>
    <property type="match status" value="1"/>
</dbReference>
<dbReference type="Gene3D" id="3.10.20.710">
    <property type="entry name" value="SATB, ubiquitin-like oligomerisation domain"/>
    <property type="match status" value="1"/>
</dbReference>
<dbReference type="InterPro" id="IPR003350">
    <property type="entry name" value="CUT_dom"/>
</dbReference>
<dbReference type="InterPro" id="IPR032355">
    <property type="entry name" value="CUTL"/>
</dbReference>
<dbReference type="InterPro" id="IPR001356">
    <property type="entry name" value="HD"/>
</dbReference>
<dbReference type="InterPro" id="IPR009057">
    <property type="entry name" value="Homeodomain-like_sf"/>
</dbReference>
<dbReference type="InterPro" id="IPR010982">
    <property type="entry name" value="Lambda_DNA-bd_dom_sf"/>
</dbReference>
<dbReference type="InterPro" id="IPR039673">
    <property type="entry name" value="SATB1/SATB2"/>
</dbReference>
<dbReference type="InterPro" id="IPR038216">
    <property type="entry name" value="SATB_CUTL_sf"/>
</dbReference>
<dbReference type="InterPro" id="IPR038224">
    <property type="entry name" value="SATB_ULD_sf"/>
</dbReference>
<dbReference type="InterPro" id="IPR032392">
    <property type="entry name" value="ULD"/>
</dbReference>
<dbReference type="PANTHER" id="PTHR15116">
    <property type="entry name" value="DNA-BINDING PROTEIN SATB FAMILY MEMBER"/>
    <property type="match status" value="1"/>
</dbReference>
<dbReference type="PANTHER" id="PTHR15116:SF15">
    <property type="entry name" value="DNA-BINDING PROTEIN SATB2"/>
    <property type="match status" value="1"/>
</dbReference>
<dbReference type="Pfam" id="PF02376">
    <property type="entry name" value="CUT"/>
    <property type="match status" value="2"/>
</dbReference>
<dbReference type="Pfam" id="PF16557">
    <property type="entry name" value="CUTL"/>
    <property type="match status" value="1"/>
</dbReference>
<dbReference type="Pfam" id="PF00046">
    <property type="entry name" value="Homeodomain"/>
    <property type="match status" value="1"/>
</dbReference>
<dbReference type="Pfam" id="PF16534">
    <property type="entry name" value="ULD"/>
    <property type="match status" value="1"/>
</dbReference>
<dbReference type="SMART" id="SM01109">
    <property type="entry name" value="CUT"/>
    <property type="match status" value="2"/>
</dbReference>
<dbReference type="SMART" id="SM00389">
    <property type="entry name" value="HOX"/>
    <property type="match status" value="1"/>
</dbReference>
<dbReference type="SUPFAM" id="SSF46689">
    <property type="entry name" value="Homeodomain-like"/>
    <property type="match status" value="1"/>
</dbReference>
<dbReference type="SUPFAM" id="SSF47413">
    <property type="entry name" value="lambda repressor-like DNA-binding domains"/>
    <property type="match status" value="2"/>
</dbReference>
<dbReference type="PROSITE" id="PS51982">
    <property type="entry name" value="CMP"/>
    <property type="match status" value="1"/>
</dbReference>
<dbReference type="PROSITE" id="PS51042">
    <property type="entry name" value="CUT"/>
    <property type="match status" value="2"/>
</dbReference>
<dbReference type="PROSITE" id="PS51983">
    <property type="entry name" value="CUTL"/>
    <property type="match status" value="1"/>
</dbReference>
<dbReference type="PROSITE" id="PS50071">
    <property type="entry name" value="HOMEOBOX_2"/>
    <property type="match status" value="1"/>
</dbReference>
<protein>
    <recommendedName>
        <fullName>DNA-binding protein SATB2</fullName>
    </recommendedName>
    <alternativeName>
        <fullName>Special AT-rich sequence-binding protein 2</fullName>
    </alternativeName>
</protein>
<comment type="function">
    <text evidence="8">Binds to DNA, at nuclear matrix- or scaffold-associated regions. Thought to recognize the sugar-phosphate structure of double-stranded DNA. Transcription factor controlling nuclear gene expression, by binding to matrix attachment regions (MARs) of DNA and inducing a local chromatin-loop remodeling. Acts as a docking site for several chromatin remodeling enzymes and also by recruiting corepressors (HDACs) or coactivators (HATs) directly to promoters and enhancers. Required for the initiation of the upper-layer neurons (UL1) specific genetic program and for the inactivation of deep-layer neurons (DL) and UL2 specific genes, probably by modulating BCL11B expression. Repressor of Ctip2 and regulatory determinant of corticocortical connections in the developing cerebral cortex. May play an important role in palate formation. Acts as a molecular node in a transcriptional network regulating skeletal development and osteoblast differentiation.</text>
</comment>
<comment type="subunit">
    <text evidence="1 8">Interacts with ATF4 and RUNX2; resulting in enhanced DNA binding and transactivation by these transcription factors (By similarity). Interacts with PIAS1.</text>
</comment>
<comment type="interaction">
    <interactant intactId="EBI-8298169">
        <id>Q9UPW6</id>
    </interactant>
    <interactant intactId="EBI-12818681">
        <id>Q9H1A7</id>
        <label>POLR2J3</label>
    </interactant>
    <organismsDiffer>false</organismsDiffer>
    <experiments>3</experiments>
</comment>
<comment type="interaction">
    <interactant intactId="EBI-8298169">
        <id>Q9UPW6</id>
    </interactant>
    <interactant intactId="EBI-743796">
        <id>Q8TBN0</id>
        <label>RAB3IL1</label>
    </interactant>
    <organismsDiffer>false</organismsDiffer>
    <experiments>3</experiments>
</comment>
<comment type="interaction">
    <interactant intactId="EBI-8298169">
        <id>Q9UPW6</id>
    </interactant>
    <interactant intactId="EBI-6481107">
        <id>Q9H3D4-2</id>
        <label>TP63</label>
    </interactant>
    <organismsDiffer>false</organismsDiffer>
    <experiments>5</experiments>
</comment>
<comment type="subcellular location">
    <subcellularLocation>
        <location evidence="2 3 8">Nucleus matrix</location>
    </subcellularLocation>
</comment>
<comment type="alternative products">
    <event type="alternative splicing"/>
    <isoform>
        <id>Q9UPW6-1</id>
        <name>1</name>
        <sequence type="displayed"/>
    </isoform>
    <isoform>
        <id>Q9UPW6-2</id>
        <name>2</name>
        <sequence type="described" ref="VSP_054416"/>
    </isoform>
</comment>
<comment type="tissue specificity">
    <text evidence="8">High expression in adult brain, moderate expression in fetal brain, and weak expression in adult liver, kidney, and spinal cord and in select brain regions, including amygdala, corpus callosum, caudate nucleus, and hippocampus.</text>
</comment>
<comment type="PTM">
    <text evidence="8">Sumoylated by PIAS1. Sumoylation promotes nuclear localization, but represses transcription factor activity.</text>
</comment>
<comment type="disease">
    <text evidence="7">Chromosomal aberrations involving SATB2 are found in isolated cleft palate. Translocation t(2;7); translocation t(2;11).</text>
</comment>
<comment type="disease" evidence="7 9">
    <disease id="DI-01837">
        <name>Cleft palate isolated</name>
        <acronym>CPI</acronym>
        <description>A congenital fissure of the soft and/or hard palate, due to faulty fusion. Isolated cleft palate is not associated with cleft lips. Some patients may manifest other craniofacial dysmorphic features, intellectual disability, and osteoporosis.</description>
        <dbReference type="MIM" id="119540"/>
    </disease>
    <text>The disease may be caused by variants affecting the gene represented in this entry.</text>
</comment>
<comment type="disease">
    <text evidence="10">A chromosomal aberration involving SATB2 is found in a patient with classical features of Toriello-Carey syndrome. Translocation t(2;14)(q33;q22).</text>
</comment>
<comment type="similarity">
    <text evidence="12">Belongs to the CUT homeobox family.</text>
</comment>
<comment type="sequence caution" evidence="12">
    <conflict type="erroneous initiation">
        <sequence resource="EMBL-CDS" id="BAA82986"/>
    </conflict>
</comment>
<sequence length="733" mass="82555">MERRSESPCLRDSPDRRSGSPDVKGPPPVKVARLEQNGSPMGARGRPNGAVAKAVGGLMIPVFCVVEQLDGSLEYDNREEHAEFVLVRKDVLFSQLVETALLALGYSHSSAAQAQGIIKLGRWNPLPLSYVTDAPDATVADMLQDVYHVVTLKIQLQSCSKLEDLPAEQWNHATVRNALKELLKEMNQSTLAKECPLSQSMISSIVNSTYYANVSATKCQEFGRWYKKYKKIKVERVERENLSDYCVLGQRPMHLPNMNQLASLGKTNEQSPHSQIHHSTPIRNQVPALQPIMSPGLLSPQLSPQLVRQQIAMAHLINQQIAVSRLLAHQHPQAINQQFLNHPPIPRAVKPEPTNSSVEVSPDIYQQVRDELKRASVSQAVFARVAFNRTQGLLSEILRKEEDPRTASQSLLVNLRAMQNFLNLPEVERDRIYQDERERSMNPNVSMVSSASSSPSSSRTPQAKTSTPTTDLPIKVDGANINITAAIYDEIQQEMKRAKVSQALFAKVAANKSQGWLCELLRWKENPSPENRTLWENLCTIRRFLNLPQHERDVIYEEESRHHHSERMQHVVQLPPEPVQVLHRQQSQPAKESSPPREEAPPPPPPTEDSCAKKPRSRTKISLEALGILQSFIHDVGLYPDQEAIHTLSAQLDLPKHTIIKFFQNQRYHVKHHGKLKEHLGSAVDVAEYKDEELLTESEENDSEEGSEEMYKVEAEEENADKSKAAPAEIDQR</sequence>
<proteinExistence type="evidence at protein level"/>
<organism>
    <name type="scientific">Homo sapiens</name>
    <name type="common">Human</name>
    <dbReference type="NCBI Taxonomy" id="9606"/>
    <lineage>
        <taxon>Eukaryota</taxon>
        <taxon>Metazoa</taxon>
        <taxon>Chordata</taxon>
        <taxon>Craniata</taxon>
        <taxon>Vertebrata</taxon>
        <taxon>Euteleostomi</taxon>
        <taxon>Mammalia</taxon>
        <taxon>Eutheria</taxon>
        <taxon>Euarchontoglires</taxon>
        <taxon>Primates</taxon>
        <taxon>Haplorrhini</taxon>
        <taxon>Catarrhini</taxon>
        <taxon>Hominidae</taxon>
        <taxon>Homo</taxon>
    </lineage>
</organism>